<feature type="initiator methionine" description="Removed" evidence="2">
    <location>
        <position position="1"/>
    </location>
</feature>
<feature type="chain" id="PRO_0000192953" description="Myc box-dependent-interacting protein 1">
    <location>
        <begin position="2"/>
        <end position="588"/>
    </location>
</feature>
<feature type="domain" description="BAR" evidence="6">
    <location>
        <begin position="29"/>
        <end position="276"/>
    </location>
</feature>
<feature type="domain" description="SH3" evidence="5">
    <location>
        <begin position="515"/>
        <end position="588"/>
    </location>
</feature>
<feature type="region of interest" description="Interaction with BIN2" evidence="1">
    <location>
        <begin position="2"/>
        <end position="122"/>
    </location>
</feature>
<feature type="region of interest" description="Disordered" evidence="7">
    <location>
        <begin position="279"/>
        <end position="355"/>
    </location>
</feature>
<feature type="region of interest" description="Clathrin-binding" evidence="1">
    <location>
        <begin position="379"/>
        <end position="422"/>
    </location>
</feature>
<feature type="region of interest" description="Disordered" evidence="7">
    <location>
        <begin position="448"/>
        <end position="483"/>
    </location>
</feature>
<feature type="coiled-coil region" evidence="4">
    <location>
        <begin position="15"/>
        <end position="42"/>
    </location>
</feature>
<feature type="coiled-coil region" evidence="4">
    <location>
        <begin position="193"/>
        <end position="274"/>
    </location>
</feature>
<feature type="compositionally biased region" description="Low complexity" evidence="7">
    <location>
        <begin position="474"/>
        <end position="483"/>
    </location>
</feature>
<feature type="modified residue" description="N-acetylalanine" evidence="2">
    <location>
        <position position="2"/>
    </location>
</feature>
<feature type="modified residue" description="Phosphoserine" evidence="2">
    <location>
        <position position="296"/>
    </location>
</feature>
<feature type="modified residue" description="Phosphoserine" evidence="17">
    <location>
        <position position="298"/>
    </location>
</feature>
<feature type="modified residue" description="Phosphoserine" evidence="17">
    <location>
        <position position="304"/>
    </location>
</feature>
<feature type="modified residue" description="Phosphothreonine" evidence="17">
    <location>
        <position position="308"/>
    </location>
</feature>
<feature type="modified residue" description="Phosphoserine" evidence="17">
    <location>
        <position position="324"/>
    </location>
</feature>
<feature type="modified residue" description="Phosphoserine" evidence="2">
    <location>
        <position position="332"/>
    </location>
</feature>
<feature type="splice variant" id="VSP_000256" description="In isoform AMPH2-4 and isoform AMPH2-6." evidence="16">
    <location>
        <begin position="173"/>
        <end position="205"/>
    </location>
</feature>
<feature type="splice variant" id="VSP_000257" description="In isoform AMPH2-4." evidence="16">
    <location>
        <begin position="253"/>
        <end position="588"/>
    </location>
</feature>
<feature type="splice variant" id="VSP_000258" description="In isoform AMPH2-3." evidence="16">
    <location>
        <begin position="335"/>
        <end position="588"/>
    </location>
</feature>
<feature type="splice variant" id="VSP_000259" description="In isoform AMPH2-5 and isoform AMPH2-6." evidence="16">
    <location>
        <begin position="335"/>
        <end position="482"/>
    </location>
</feature>
<feature type="splice variant" id="VSP_000260" description="In isoform AMPH2-2." evidence="16">
    <location>
        <begin position="423"/>
        <end position="460"/>
    </location>
</feature>
<feature type="strand" evidence="18">
    <location>
        <begin position="518"/>
        <end position="524"/>
    </location>
</feature>
<feature type="strand" evidence="18">
    <location>
        <begin position="541"/>
        <end position="545"/>
    </location>
</feature>
<feature type="helix" evidence="18">
    <location>
        <begin position="550"/>
        <end position="552"/>
    </location>
</feature>
<feature type="strand" evidence="18">
    <location>
        <begin position="557"/>
        <end position="562"/>
    </location>
</feature>
<feature type="helix" evidence="18">
    <location>
        <begin position="563"/>
        <end position="567"/>
    </location>
</feature>
<feature type="helix" evidence="18">
    <location>
        <begin position="572"/>
        <end position="575"/>
    </location>
</feature>
<feature type="strand" evidence="18">
    <location>
        <begin position="577"/>
        <end position="580"/>
    </location>
</feature>
<feature type="helix" evidence="18">
    <location>
        <begin position="581"/>
        <end position="583"/>
    </location>
</feature>
<feature type="strand" evidence="18">
    <location>
        <begin position="584"/>
        <end position="587"/>
    </location>
</feature>
<evidence type="ECO:0000250" key="1"/>
<evidence type="ECO:0000250" key="2">
    <source>
        <dbReference type="UniProtKB" id="O00499"/>
    </source>
</evidence>
<evidence type="ECO:0000250" key="3">
    <source>
        <dbReference type="UniProtKB" id="O08539"/>
    </source>
</evidence>
<evidence type="ECO:0000255" key="4"/>
<evidence type="ECO:0000255" key="5">
    <source>
        <dbReference type="PROSITE-ProRule" id="PRU00192"/>
    </source>
</evidence>
<evidence type="ECO:0000255" key="6">
    <source>
        <dbReference type="PROSITE-ProRule" id="PRU00361"/>
    </source>
</evidence>
<evidence type="ECO:0000256" key="7">
    <source>
        <dbReference type="SAM" id="MobiDB-lite"/>
    </source>
</evidence>
<evidence type="ECO:0000269" key="8">
    <source>
    </source>
</evidence>
<evidence type="ECO:0000269" key="9">
    <source>
    </source>
</evidence>
<evidence type="ECO:0000269" key="10">
    <source>
    </source>
</evidence>
<evidence type="ECO:0000269" key="11">
    <source>
    </source>
</evidence>
<evidence type="ECO:0000269" key="12">
    <source>
    </source>
</evidence>
<evidence type="ECO:0000269" key="13">
    <source>
    </source>
</evidence>
<evidence type="ECO:0000269" key="14">
    <source>
    </source>
</evidence>
<evidence type="ECO:0000269" key="15">
    <source>
    </source>
</evidence>
<evidence type="ECO:0000305" key="16"/>
<evidence type="ECO:0007744" key="17">
    <source>
    </source>
</evidence>
<evidence type="ECO:0007829" key="18">
    <source>
        <dbReference type="PDB" id="1BB9"/>
    </source>
</evidence>
<proteinExistence type="evidence at protein level"/>
<protein>
    <recommendedName>
        <fullName>Myc box-dependent-interacting protein 1</fullName>
    </recommendedName>
    <alternativeName>
        <fullName>Amphiphysin II</fullName>
    </alternativeName>
    <alternativeName>
        <fullName>Amphiphysin-like protein</fullName>
    </alternativeName>
    <alternativeName>
        <fullName>Bridging integrator 1</fullName>
    </alternativeName>
</protein>
<organism>
    <name type="scientific">Rattus norvegicus</name>
    <name type="common">Rat</name>
    <dbReference type="NCBI Taxonomy" id="10116"/>
    <lineage>
        <taxon>Eukaryota</taxon>
        <taxon>Metazoa</taxon>
        <taxon>Chordata</taxon>
        <taxon>Craniata</taxon>
        <taxon>Vertebrata</taxon>
        <taxon>Euteleostomi</taxon>
        <taxon>Mammalia</taxon>
        <taxon>Eutheria</taxon>
        <taxon>Euarchontoglires</taxon>
        <taxon>Glires</taxon>
        <taxon>Rodentia</taxon>
        <taxon>Myomorpha</taxon>
        <taxon>Muroidea</taxon>
        <taxon>Muridae</taxon>
        <taxon>Murinae</taxon>
        <taxon>Rattus</taxon>
    </lineage>
</organism>
<dbReference type="EMBL" id="Y13380">
    <property type="protein sequence ID" value="CAA73807.1"/>
    <property type="molecule type" value="mRNA"/>
</dbReference>
<dbReference type="RefSeq" id="NP_446411.1">
    <molecule id="O08839-1"/>
    <property type="nucleotide sequence ID" value="NM_053959.2"/>
</dbReference>
<dbReference type="PDB" id="1BB9">
    <property type="method" value="X-ray"/>
    <property type="resolution" value="2.20 A"/>
    <property type="chains" value="A=495-588"/>
</dbReference>
<dbReference type="PDBsum" id="1BB9"/>
<dbReference type="BMRB" id="O08839"/>
<dbReference type="SMR" id="O08839"/>
<dbReference type="BioGRID" id="250629">
    <property type="interactions" value="16"/>
</dbReference>
<dbReference type="CORUM" id="O08839"/>
<dbReference type="DIP" id="DIP-30979N"/>
<dbReference type="ELM" id="O08839"/>
<dbReference type="FunCoup" id="O08839">
    <property type="interactions" value="2061"/>
</dbReference>
<dbReference type="IntAct" id="O08839">
    <property type="interactions" value="12"/>
</dbReference>
<dbReference type="MINT" id="O08839"/>
<dbReference type="STRING" id="10116.ENSRNOP00000017573"/>
<dbReference type="GlyGen" id="O08839">
    <property type="glycosylation" value="2 sites"/>
</dbReference>
<dbReference type="iPTMnet" id="O08839"/>
<dbReference type="PhosphoSitePlus" id="O08839"/>
<dbReference type="SwissPalm" id="O08839"/>
<dbReference type="jPOST" id="O08839"/>
<dbReference type="PaxDb" id="10116-ENSRNOP00000017573"/>
<dbReference type="Ensembl" id="ENSRNOT00000017573.8">
    <molecule id="O08839-1"/>
    <property type="protein sequence ID" value="ENSRNOP00000017573.7"/>
    <property type="gene ID" value="ENSRNOG00000012852.9"/>
</dbReference>
<dbReference type="GeneID" id="117028"/>
<dbReference type="KEGG" id="rno:117028"/>
<dbReference type="UCSC" id="RGD:621786">
    <molecule id="O08839-1"/>
    <property type="organism name" value="rat"/>
</dbReference>
<dbReference type="AGR" id="RGD:621786"/>
<dbReference type="CTD" id="274"/>
<dbReference type="RGD" id="621786">
    <property type="gene designation" value="Bin1"/>
</dbReference>
<dbReference type="eggNOG" id="KOG3771">
    <property type="taxonomic scope" value="Eukaryota"/>
</dbReference>
<dbReference type="GeneTree" id="ENSGT00950000182882"/>
<dbReference type="InParanoid" id="O08839"/>
<dbReference type="OMA" id="QEYDYYN"/>
<dbReference type="OrthoDB" id="446293at2759"/>
<dbReference type="PhylomeDB" id="O08839"/>
<dbReference type="Reactome" id="R-RNO-8856828">
    <property type="pathway name" value="Clathrin-mediated endocytosis"/>
</dbReference>
<dbReference type="EvolutionaryTrace" id="O08839"/>
<dbReference type="PRO" id="PR:O08839"/>
<dbReference type="Proteomes" id="UP000002494">
    <property type="component" value="Chromosome 18"/>
</dbReference>
<dbReference type="GO" id="GO:0030424">
    <property type="term" value="C:axon"/>
    <property type="evidence" value="ECO:0000250"/>
    <property type="project" value="Alzheimers_University_of_Toronto"/>
</dbReference>
<dbReference type="GO" id="GO:0043194">
    <property type="term" value="C:axon initial segment"/>
    <property type="evidence" value="ECO:0000314"/>
    <property type="project" value="Alzheimers_University_of_Toronto"/>
</dbReference>
<dbReference type="GO" id="GO:0043679">
    <property type="term" value="C:axon terminus"/>
    <property type="evidence" value="ECO:0000314"/>
    <property type="project" value="RGD"/>
</dbReference>
<dbReference type="GO" id="GO:0044300">
    <property type="term" value="C:cerebellar mossy fiber"/>
    <property type="evidence" value="ECO:0000314"/>
    <property type="project" value="RGD"/>
</dbReference>
<dbReference type="GO" id="GO:0005856">
    <property type="term" value="C:cytoskeleton"/>
    <property type="evidence" value="ECO:0000266"/>
    <property type="project" value="RGD"/>
</dbReference>
<dbReference type="GO" id="GO:0005829">
    <property type="term" value="C:cytosol"/>
    <property type="evidence" value="ECO:0007669"/>
    <property type="project" value="Ensembl"/>
</dbReference>
<dbReference type="GO" id="GO:0030425">
    <property type="term" value="C:dendrite"/>
    <property type="evidence" value="ECO:0000266"/>
    <property type="project" value="RGD"/>
</dbReference>
<dbReference type="GO" id="GO:0005768">
    <property type="term" value="C:endosome"/>
    <property type="evidence" value="ECO:0007669"/>
    <property type="project" value="UniProtKB-SubCell"/>
</dbReference>
<dbReference type="GO" id="GO:0098850">
    <property type="term" value="C:extrinsic component of synaptic vesicle membrane"/>
    <property type="evidence" value="ECO:0000314"/>
    <property type="project" value="SynGO"/>
</dbReference>
<dbReference type="GO" id="GO:0098978">
    <property type="term" value="C:glutamatergic synapse"/>
    <property type="evidence" value="ECO:0000314"/>
    <property type="project" value="SynGO"/>
</dbReference>
<dbReference type="GO" id="GO:0031674">
    <property type="term" value="C:I band"/>
    <property type="evidence" value="ECO:0000314"/>
    <property type="project" value="Alzheimers_University_of_Toronto"/>
</dbReference>
<dbReference type="GO" id="GO:0060987">
    <property type="term" value="C:lipid tube"/>
    <property type="evidence" value="ECO:0000250"/>
    <property type="project" value="Alzheimers_University_of_Toronto"/>
</dbReference>
<dbReference type="GO" id="GO:0016020">
    <property type="term" value="C:membrane"/>
    <property type="evidence" value="ECO:0000266"/>
    <property type="project" value="RGD"/>
</dbReference>
<dbReference type="GO" id="GO:0005874">
    <property type="term" value="C:microtubule"/>
    <property type="evidence" value="ECO:0000250"/>
    <property type="project" value="Alzheimers_University_of_Toronto"/>
</dbReference>
<dbReference type="GO" id="GO:0033268">
    <property type="term" value="C:node of Ranvier"/>
    <property type="evidence" value="ECO:0000314"/>
    <property type="project" value="Alzheimers_University_of_Toronto"/>
</dbReference>
<dbReference type="GO" id="GO:0005635">
    <property type="term" value="C:nuclear envelope"/>
    <property type="evidence" value="ECO:0000266"/>
    <property type="project" value="RGD"/>
</dbReference>
<dbReference type="GO" id="GO:0005634">
    <property type="term" value="C:nucleus"/>
    <property type="evidence" value="ECO:0000266"/>
    <property type="project" value="RGD"/>
</dbReference>
<dbReference type="GO" id="GO:0005886">
    <property type="term" value="C:plasma membrane"/>
    <property type="evidence" value="ECO:0000318"/>
    <property type="project" value="GO_Central"/>
</dbReference>
<dbReference type="GO" id="GO:0098794">
    <property type="term" value="C:postsynapse"/>
    <property type="evidence" value="ECO:0000266"/>
    <property type="project" value="RGD"/>
</dbReference>
<dbReference type="GO" id="GO:0098793">
    <property type="term" value="C:presynapse"/>
    <property type="evidence" value="ECO:0000266"/>
    <property type="project" value="RGD"/>
</dbReference>
<dbReference type="GO" id="GO:0090571">
    <property type="term" value="C:RNA polymerase II transcription repressor complex"/>
    <property type="evidence" value="ECO:0000266"/>
    <property type="project" value="RGD"/>
</dbReference>
<dbReference type="GO" id="GO:0045202">
    <property type="term" value="C:synapse"/>
    <property type="evidence" value="ECO:0000266"/>
    <property type="project" value="RGD"/>
</dbReference>
<dbReference type="GO" id="GO:0008021">
    <property type="term" value="C:synaptic vesicle"/>
    <property type="evidence" value="ECO:0000314"/>
    <property type="project" value="RGD"/>
</dbReference>
<dbReference type="GO" id="GO:0030315">
    <property type="term" value="C:T-tubule"/>
    <property type="evidence" value="ECO:0000314"/>
    <property type="project" value="Alzheimers_University_of_Toronto"/>
</dbReference>
<dbReference type="GO" id="GO:0043196">
    <property type="term" value="C:varicosity"/>
    <property type="evidence" value="ECO:0000314"/>
    <property type="project" value="RGD"/>
</dbReference>
<dbReference type="GO" id="GO:0031982">
    <property type="term" value="C:vesicle"/>
    <property type="evidence" value="ECO:0000266"/>
    <property type="project" value="RGD"/>
</dbReference>
<dbReference type="GO" id="GO:0030018">
    <property type="term" value="C:Z disc"/>
    <property type="evidence" value="ECO:0000314"/>
    <property type="project" value="Alzheimers_University_of_Toronto"/>
</dbReference>
<dbReference type="GO" id="GO:0051015">
    <property type="term" value="F:actin filament binding"/>
    <property type="evidence" value="ECO:0000266"/>
    <property type="project" value="RGD"/>
</dbReference>
<dbReference type="GO" id="GO:0019828">
    <property type="term" value="F:aspartic-type endopeptidase inhibitor activity"/>
    <property type="evidence" value="ECO:0000266"/>
    <property type="project" value="RGD"/>
</dbReference>
<dbReference type="GO" id="GO:0051020">
    <property type="term" value="F:GTPase binding"/>
    <property type="evidence" value="ECO:0000353"/>
    <property type="project" value="RGD"/>
</dbReference>
<dbReference type="GO" id="GO:0042802">
    <property type="term" value="F:identical protein binding"/>
    <property type="evidence" value="ECO:0000266"/>
    <property type="project" value="RGD"/>
</dbReference>
<dbReference type="GO" id="GO:0008289">
    <property type="term" value="F:lipid binding"/>
    <property type="evidence" value="ECO:0000266"/>
    <property type="project" value="RGD"/>
</dbReference>
<dbReference type="GO" id="GO:0005543">
    <property type="term" value="F:phospholipid binding"/>
    <property type="evidence" value="ECO:0000318"/>
    <property type="project" value="GO_Central"/>
</dbReference>
<dbReference type="GO" id="GO:0002020">
    <property type="term" value="F:protease binding"/>
    <property type="evidence" value="ECO:0000266"/>
    <property type="project" value="RGD"/>
</dbReference>
<dbReference type="GO" id="GO:0044877">
    <property type="term" value="F:protein-containing complex binding"/>
    <property type="evidence" value="ECO:0000353"/>
    <property type="project" value="RGD"/>
</dbReference>
<dbReference type="GO" id="GO:0051087">
    <property type="term" value="F:protein-folding chaperone binding"/>
    <property type="evidence" value="ECO:0000266"/>
    <property type="project" value="RGD"/>
</dbReference>
<dbReference type="GO" id="GO:0070063">
    <property type="term" value="F:RNA polymerase binding"/>
    <property type="evidence" value="ECO:0000266"/>
    <property type="project" value="RGD"/>
</dbReference>
<dbReference type="GO" id="GO:0035591">
    <property type="term" value="F:signaling adaptor activity"/>
    <property type="evidence" value="ECO:0000266"/>
    <property type="project" value="RGD"/>
</dbReference>
<dbReference type="GO" id="GO:0048156">
    <property type="term" value="F:tau protein binding"/>
    <property type="evidence" value="ECO:0000266"/>
    <property type="project" value="RGD"/>
</dbReference>
<dbReference type="GO" id="GO:0008333">
    <property type="term" value="P:endosome to lysosome transport"/>
    <property type="evidence" value="ECO:0000266"/>
    <property type="project" value="RGD"/>
</dbReference>
<dbReference type="GO" id="GO:0060988">
    <property type="term" value="P:lipid tube assembly"/>
    <property type="evidence" value="ECO:0000250"/>
    <property type="project" value="Alzheimers_University_of_Toronto"/>
</dbReference>
<dbReference type="GO" id="GO:0042692">
    <property type="term" value="P:muscle cell differentiation"/>
    <property type="evidence" value="ECO:0000266"/>
    <property type="project" value="RGD"/>
</dbReference>
<dbReference type="GO" id="GO:1902430">
    <property type="term" value="P:negative regulation of amyloid-beta formation"/>
    <property type="evidence" value="ECO:0000266"/>
    <property type="project" value="RGD"/>
</dbReference>
<dbReference type="GO" id="GO:1904878">
    <property type="term" value="P:negative regulation of calcium ion transmembrane transport via high voltage-gated calcium channel"/>
    <property type="evidence" value="ECO:0000266"/>
    <property type="project" value="RGD"/>
</dbReference>
<dbReference type="GO" id="GO:1901380">
    <property type="term" value="P:negative regulation of potassium ion transmembrane transport"/>
    <property type="evidence" value="ECO:0000266"/>
    <property type="project" value="RGD"/>
</dbReference>
<dbReference type="GO" id="GO:0000122">
    <property type="term" value="P:negative regulation of transcription by RNA polymerase II"/>
    <property type="evidence" value="ECO:0000266"/>
    <property type="project" value="RGD"/>
</dbReference>
<dbReference type="GO" id="GO:1903946">
    <property type="term" value="P:negative regulation of ventricular cardiac muscle cell action potential"/>
    <property type="evidence" value="ECO:0000266"/>
    <property type="project" value="RGD"/>
</dbReference>
<dbReference type="GO" id="GO:0051647">
    <property type="term" value="P:nucleus localization"/>
    <property type="evidence" value="ECO:0000266"/>
    <property type="project" value="RGD"/>
</dbReference>
<dbReference type="GO" id="GO:0006997">
    <property type="term" value="P:nucleus organization"/>
    <property type="evidence" value="ECO:0000266"/>
    <property type="project" value="RGD"/>
</dbReference>
<dbReference type="GO" id="GO:0030838">
    <property type="term" value="P:positive regulation of actin filament polymerization"/>
    <property type="evidence" value="ECO:0000266"/>
    <property type="project" value="RGD"/>
</dbReference>
<dbReference type="GO" id="GO:0043065">
    <property type="term" value="P:positive regulation of apoptotic process"/>
    <property type="evidence" value="ECO:0000250"/>
    <property type="project" value="Alzheimers_University_of_Toronto"/>
</dbReference>
<dbReference type="GO" id="GO:0048711">
    <property type="term" value="P:positive regulation of astrocyte differentiation"/>
    <property type="evidence" value="ECO:0000250"/>
    <property type="project" value="Alzheimers_University_of_Toronto"/>
</dbReference>
<dbReference type="GO" id="GO:0045807">
    <property type="term" value="P:positive regulation of endocytosis"/>
    <property type="evidence" value="ECO:0000315"/>
    <property type="project" value="RGD"/>
</dbReference>
<dbReference type="GO" id="GO:0010564">
    <property type="term" value="P:regulation of cell cycle process"/>
    <property type="evidence" value="ECO:0000266"/>
    <property type="project" value="RGD"/>
</dbReference>
<dbReference type="GO" id="GO:0086091">
    <property type="term" value="P:regulation of heart rate by cardiac conduction"/>
    <property type="evidence" value="ECO:0000266"/>
    <property type="project" value="RGD"/>
</dbReference>
<dbReference type="GO" id="GO:0045664">
    <property type="term" value="P:regulation of neuron differentiation"/>
    <property type="evidence" value="ECO:0000250"/>
    <property type="project" value="Alzheimers_University_of_Toronto"/>
</dbReference>
<dbReference type="GO" id="GO:0032496">
    <property type="term" value="P:response to lipopolysaccharide"/>
    <property type="evidence" value="ECO:0000266"/>
    <property type="project" value="RGD"/>
</dbReference>
<dbReference type="GO" id="GO:0048488">
    <property type="term" value="P:synaptic vesicle endocytosis"/>
    <property type="evidence" value="ECO:0000314"/>
    <property type="project" value="SynGO"/>
</dbReference>
<dbReference type="GO" id="GO:0033292">
    <property type="term" value="P:T-tubule organization"/>
    <property type="evidence" value="ECO:0000266"/>
    <property type="project" value="RGD"/>
</dbReference>
<dbReference type="CDD" id="cd07611">
    <property type="entry name" value="BAR_Amphiphysin_I_II"/>
    <property type="match status" value="1"/>
</dbReference>
<dbReference type="CDD" id="cd12139">
    <property type="entry name" value="SH3_Bin1"/>
    <property type="match status" value="1"/>
</dbReference>
<dbReference type="FunFam" id="1.20.1270.60:FF:000013">
    <property type="entry name" value="Amphiphysin isoform 2"/>
    <property type="match status" value="1"/>
</dbReference>
<dbReference type="FunFam" id="2.30.30.40:FF:000029">
    <property type="entry name" value="myc box-dependent-interacting protein 1 isoform X2"/>
    <property type="match status" value="1"/>
</dbReference>
<dbReference type="Gene3D" id="1.20.1270.60">
    <property type="entry name" value="Arfaptin homology (AH) domain/BAR domain"/>
    <property type="match status" value="1"/>
</dbReference>
<dbReference type="Gene3D" id="2.30.30.40">
    <property type="entry name" value="SH3 Domains"/>
    <property type="match status" value="1"/>
</dbReference>
<dbReference type="InterPro" id="IPR027267">
    <property type="entry name" value="AH/BAR_dom_sf"/>
</dbReference>
<dbReference type="InterPro" id="IPR003005">
    <property type="entry name" value="Amphiphysin"/>
</dbReference>
<dbReference type="InterPro" id="IPR035471">
    <property type="entry name" value="Amphiphysin-2_SH3"/>
</dbReference>
<dbReference type="InterPro" id="IPR003023">
    <property type="entry name" value="Amphiphysin_2"/>
</dbReference>
<dbReference type="InterPro" id="IPR004148">
    <property type="entry name" value="BAR_dom"/>
</dbReference>
<dbReference type="InterPro" id="IPR036028">
    <property type="entry name" value="SH3-like_dom_sf"/>
</dbReference>
<dbReference type="InterPro" id="IPR001452">
    <property type="entry name" value="SH3_domain"/>
</dbReference>
<dbReference type="PANTHER" id="PTHR46514">
    <property type="entry name" value="AMPHIPHYSIN"/>
    <property type="match status" value="1"/>
</dbReference>
<dbReference type="PANTHER" id="PTHR46514:SF4">
    <property type="entry name" value="MYC BOX-DEPENDENT-INTERACTING PROTEIN 1"/>
    <property type="match status" value="1"/>
</dbReference>
<dbReference type="Pfam" id="PF03114">
    <property type="entry name" value="BAR"/>
    <property type="match status" value="1"/>
</dbReference>
<dbReference type="Pfam" id="PF14604">
    <property type="entry name" value="SH3_9"/>
    <property type="match status" value="1"/>
</dbReference>
<dbReference type="PRINTS" id="PR01251">
    <property type="entry name" value="AMPHIPHYSIN"/>
</dbReference>
<dbReference type="PRINTS" id="PR01253">
    <property type="entry name" value="AMPHIPHYSIN2"/>
</dbReference>
<dbReference type="PRINTS" id="PR00452">
    <property type="entry name" value="SH3DOMAIN"/>
</dbReference>
<dbReference type="SMART" id="SM00721">
    <property type="entry name" value="BAR"/>
    <property type="match status" value="1"/>
</dbReference>
<dbReference type="SMART" id="SM00326">
    <property type="entry name" value="SH3"/>
    <property type="match status" value="1"/>
</dbReference>
<dbReference type="SUPFAM" id="SSF103657">
    <property type="entry name" value="BAR/IMD domain-like"/>
    <property type="match status" value="1"/>
</dbReference>
<dbReference type="SUPFAM" id="SSF50044">
    <property type="entry name" value="SH3-domain"/>
    <property type="match status" value="1"/>
</dbReference>
<dbReference type="PROSITE" id="PS51021">
    <property type="entry name" value="BAR"/>
    <property type="match status" value="1"/>
</dbReference>
<dbReference type="PROSITE" id="PS50002">
    <property type="entry name" value="SH3"/>
    <property type="match status" value="1"/>
</dbReference>
<sequence>MAEMGSKGVTAGKIASNVQKKLTRAQEKVLQKLGKADETKDEQFEQCVQNFNKQLTEGTRLQKDLRTYLASVKAMHEASKKLSECLQEVYEPEWPGRDEANKIAENNDLLWMDYHQKLVDQALLTMDTYLGQFPDIKSRIAKRGRKLVDYDSARHHYESLQTAKKKDEAKIAKPVSLLEKAAPQWCQGKLQAHLVAQTNLLRNQAEEELIKAQKVFEEMNVDLQEELPSLWNSRVGFYVNTFQSIAGLEENFHKEMSKLNQNLNDVLVSLEKQHGSNTFTVKAQPSDSAPEKGNKSPSPPPDGSPAATPEIRVNHEPEPASGASPGATIPKSPSQLRKGPPVPPPPKHTPSKEMKQEQILSLFDDAFVPEISVTTPSQFEAPGPFSEQASLLDLDFEPLPPVASPVKAPTPSGQSIPWDLWEPTESQAGVLPSGEPSSAEGSFAVAWPSQTAEPGPAQPAEASEVVGGTQEPGETAASEATSSSLPAVVVETFSATVNGAVEGSTTTGRLDLPPGFMFKVQAQHDYTATDTDELQLKAGDVVLVIPFQNPEEQDEGWLMGVKESDWNQHKELEKCRGVFPENFTERVQ</sequence>
<reference key="1">
    <citation type="journal article" date="1997" name="Mol. Biol. Cell">
        <title>Amphiphysin heterodimers: potential role in clathrin-mediated endocytosis.</title>
        <authorList>
            <person name="Wigge P."/>
            <person name="Koehler K."/>
            <person name="Vallis Y."/>
            <person name="Doyle C."/>
            <person name="Owen D."/>
            <person name="Hunt S.P."/>
            <person name="McMahon H.T."/>
        </authorList>
    </citation>
    <scope>NUCLEOTIDE SEQUENCE [MRNA]</scope>
    <scope>SUBUNIT</scope>
    <scope>ALTERNATIVE SPLICING</scope>
    <source>
        <strain>Sprague-Dawley</strain>
        <tissue>Brain cortex</tissue>
        <tissue>Kidney</tissue>
    </source>
</reference>
<reference key="2">
    <citation type="journal article" date="1997" name="FEBS Lett.">
        <title>Clathrin interacts specifically with amphiphysin and is displaced by dynamin.</title>
        <authorList>
            <person name="McMahon H.T."/>
            <person name="Wigge P."/>
            <person name="Smith C."/>
        </authorList>
    </citation>
    <scope>NUCLEOTIDE SEQUENCE [MRNA] (ISOFORM AMPH2-1)</scope>
    <source>
        <strain>Sprague-Dawley</strain>
        <tissue>Brain cortex</tissue>
    </source>
</reference>
<reference key="3">
    <citation type="submission" date="2007-09" db="UniProtKB">
        <authorList>
            <person name="Lubec G."/>
            <person name="Chen W.-Q."/>
            <person name="Kang S.U."/>
            <person name="Lubec S."/>
        </authorList>
    </citation>
    <scope>PROTEIN SEQUENCE OF 155-164; 190-202; 510-537 AND 577-586</scope>
    <scope>IDENTIFICATION BY MASS SPECTROMETRY</scope>
    <source>
        <strain>Sprague-Dawley</strain>
        <tissue>Brain</tissue>
        <tissue>Hippocampus</tissue>
    </source>
</reference>
<reference key="4">
    <citation type="journal article" date="1997" name="J. Biol. Chem.">
        <title>Synaptojanin forms two separate complexes in the nerve terminal. Interactions with endophilin and amphiphysin.</title>
        <authorList>
            <person name="Micheva K.D."/>
            <person name="Kay B.K."/>
            <person name="McPherson P.S."/>
        </authorList>
    </citation>
    <scope>INTERACTION WITH AMPH; DNM1 AND SYNJ1</scope>
</reference>
<reference key="5">
    <citation type="journal article" date="1997" name="J. Cell Biol.">
        <title>Amphiphysin II (SH3P9; BIN1), a member of the amphiphysin/Rvs family, is concentrated in the cortical cytomatrix of axon initial segments and nodes of Ranvier in brain and around T tubules in skeletal muscle.</title>
        <authorList>
            <person name="Butler M.H."/>
            <person name="David C."/>
            <person name="Ochoa G.-C."/>
            <person name="Freyberg Z."/>
            <person name="Daniell L."/>
            <person name="Grabs D."/>
            <person name="Cremona O."/>
            <person name="De Camilli P."/>
        </authorList>
    </citation>
    <scope>TISSUE SPECIFICITY</scope>
    <scope>SUBCELLULAR LOCATION</scope>
    <source>
        <tissue>Brain</tissue>
        <tissue>Skeletal muscle</tissue>
    </source>
</reference>
<reference key="6">
    <citation type="journal article" date="1999" name="Cell">
        <title>A structural explanation for the binding of multiple ligands by the alpha-adaptin appendage domain.</title>
        <authorList>
            <person name="Owen D.J."/>
            <person name="Vallis Y."/>
            <person name="Noble M.E.M."/>
            <person name="Hunter J.B."/>
            <person name="Dafforn T.R."/>
            <person name="Evans P.R."/>
            <person name="McMahon H.T."/>
        </authorList>
    </citation>
    <scope>INTERACTION WITH AP2A2</scope>
</reference>
<reference key="7">
    <citation type="journal article" date="1999" name="Proc. Natl. Acad. Sci. U.S.A.">
        <title>Crystal structure of the alpha appendage of AP-2 reveals a recruitment platform for clathrin-coat assembly.</title>
        <authorList>
            <person name="Traub L.M."/>
            <person name="Downs M.A."/>
            <person name="Westrich J.L."/>
            <person name="Fremont D.H."/>
        </authorList>
    </citation>
    <scope>INTERACTION WITH AP2A2</scope>
</reference>
<reference key="8">
    <citation type="journal article" date="2006" name="Dev. Cell">
        <title>Molecular switches involving the AP-2 beta2 appendage regulate endocytic cargo selection and clathrin coat assembly.</title>
        <authorList>
            <person name="Edeling M.A."/>
            <person name="Mishra S.K."/>
            <person name="Keyel P.A."/>
            <person name="Steinhauser A.L."/>
            <person name="Collins B.M."/>
            <person name="Roth R."/>
            <person name="Heuser J.E."/>
            <person name="Owen D.J."/>
            <person name="Traub L.M."/>
        </authorList>
    </citation>
    <scope>INTERACTION WITH AP2B1</scope>
</reference>
<reference key="9">
    <citation type="journal article" date="2012" name="Nat. Commun.">
        <title>Quantitative maps of protein phosphorylation sites across 14 different rat organs and tissues.</title>
        <authorList>
            <person name="Lundby A."/>
            <person name="Secher A."/>
            <person name="Lage K."/>
            <person name="Nordsborg N.B."/>
            <person name="Dmytriyev A."/>
            <person name="Lundby C."/>
            <person name="Olsen J.V."/>
        </authorList>
    </citation>
    <scope>PHOSPHORYLATION [LARGE SCALE ANALYSIS] AT SER-298; SER-304; THR-308 AND SER-324</scope>
    <scope>IDENTIFICATION BY MASS SPECTROMETRY [LARGE SCALE ANALYSIS]</scope>
</reference>
<reference key="10">
    <citation type="journal article" date="2016" name="Cell Rep.">
        <title>Loss of Bin1 promotes the propagation of Tau pathology.</title>
        <authorList>
            <person name="Calafate S."/>
            <person name="Flavin W."/>
            <person name="Verstreken P."/>
            <person name="Moechars D."/>
        </authorList>
    </citation>
    <scope>FUNCTION</scope>
</reference>
<reference key="11">
    <citation type="journal article" date="1998" name="EMBO J.">
        <title>Crystal structure of the amphiphysin-2 SH3 domain and its role in the prevention of dynamin ring formation.</title>
        <authorList>
            <person name="Owen D.J."/>
            <person name="Wigge P."/>
            <person name="Vallis Y."/>
            <person name="Moore J.D.A."/>
            <person name="Evans P.R."/>
            <person name="McMahon H.T."/>
        </authorList>
    </citation>
    <scope>X-RAY CRYSTALLOGRAPHY (2.2 ANGSTROMS) OF 506-588</scope>
    <scope>FUNCTION</scope>
    <scope>INTERACTION WITH DNM1</scope>
</reference>
<accession>O08839</accession>
<name>BIN1_RAT</name>
<keyword id="KW-0002">3D-structure</keyword>
<keyword id="KW-0007">Acetylation</keyword>
<keyword id="KW-0025">Alternative splicing</keyword>
<keyword id="KW-1003">Cell membrane</keyword>
<keyword id="KW-0175">Coiled coil</keyword>
<keyword id="KW-0963">Cytoplasm</keyword>
<keyword id="KW-0217">Developmental protein</keyword>
<keyword id="KW-0221">Differentiation</keyword>
<keyword id="KW-0903">Direct protein sequencing</keyword>
<keyword id="KW-0254">Endocytosis</keyword>
<keyword id="KW-0967">Endosome</keyword>
<keyword id="KW-0472">Membrane</keyword>
<keyword id="KW-0539">Nucleus</keyword>
<keyword id="KW-0597">Phosphoprotein</keyword>
<keyword id="KW-1185">Reference proteome</keyword>
<keyword id="KW-0728">SH3 domain</keyword>
<gene>
    <name type="primary">Bin1</name>
    <name type="synonym">Amph2</name>
    <name type="synonym">Amphl</name>
</gene>
<comment type="function">
    <text evidence="2 3 11 15">Is a key player in the control of plasma membrane curvature, and membrane shaping and remodeling. Required in muscle cells for the formation of T-tubules, tubular invaginations of the plasma membrane that function in depolarization-contraction coupling. Required in muscle cells for the formation of T-tubules, tubular invaginations of the plasma membrane that function in depolarization-contraction coupling (By similarity). Is a negative regulator of endocytosis (PubMed:27760323, PubMed:9736607). Is also involved in the regulation of intracellular vesicles sorting, modulation of BACE1 trafficking and the control of amyloid-beta production (By similarity). In neuronal circuits, endocytosis regulation may influence the internalization of PHF-tau aggregates (PubMed:27760323). May be involved in the regulation of MYC activity and the control cell proliferation (By similarity).</text>
</comment>
<comment type="subunit">
    <text evidence="2 3 8 9 10 13 14 15">Heterodimer with AMPH (PubMed:9341169, PubMed:9348539). Binds SH3GLB1 (By similarity). Interacts (via SH3 domain) with DNM1 (PubMed:9341169, PubMed:9736607). Interacts with SYNJ1 (PubMed:9341169). Interacts (via SH3 domain) with DNM2 (By similarity). Interacts with CLTC (By similarity). Interacts with AP2A2 (PubMed:10380931, PubMed:10430869). Interacts with AP2B1 (PubMed:16516836). Interacts with MYC (via N-terminal transactivation domain); the interaction requires the integrity of the conserved MYC box regions 1 and 2 (By similarity). Interacts with BIN2 (By similarity). Interacts with SNX4 (By similarity). Interacts (via BAR domain) with BACE1 (By similarity). Binds (via BAR domain) F-actin (By similarity).</text>
</comment>
<comment type="interaction">
    <interactant intactId="EBI-80095">
        <id>O08839</id>
    </interactant>
    <interactant intactId="EBI-80080">
        <id>O08838</id>
        <label>Amph</label>
    </interactant>
    <organismsDiffer>false</organismsDiffer>
    <experiments>2</experiments>
</comment>
<comment type="interaction">
    <interactant intactId="EBI-80095">
        <id>O08839</id>
    </interactant>
    <interactant intactId="EBI-80070">
        <id>P21575</id>
        <label>Dnm1</label>
    </interactant>
    <organismsDiffer>false</organismsDiffer>
    <experiments>2</experiments>
</comment>
<comment type="interaction">
    <interactant intactId="EBI-80095">
        <id>O08839</id>
    </interactant>
    <interactant intactId="EBI-7592476">
        <id>Q9CR95</id>
        <label>Necap1</label>
    </interactant>
    <organismsDiffer>true</organismsDiffer>
    <experiments>9</experiments>
</comment>
<comment type="subcellular location">
    <subcellularLocation>
        <location evidence="3">Nucleus</location>
    </subcellularLocation>
    <subcellularLocation>
        <location evidence="3">Cytoplasm</location>
    </subcellularLocation>
    <subcellularLocation>
        <location evidence="3">Endosome</location>
    </subcellularLocation>
    <subcellularLocation>
        <location evidence="12">Cell membrane</location>
        <location evidence="12">Sarcolemma</location>
        <location evidence="12">T-tubule</location>
    </subcellularLocation>
</comment>
<comment type="alternative products">
    <event type="alternative splicing"/>
    <isoform>
        <id>O08839-1</id>
        <name>AMPH2-1</name>
        <sequence type="displayed"/>
    </isoform>
    <isoform>
        <id>O08839-2</id>
        <name>AMPH2-2</name>
        <sequence type="described" ref="VSP_000260"/>
    </isoform>
    <isoform>
        <id>O08839-3</id>
        <name>AMPH2-3</name>
        <sequence type="described" ref="VSP_000258"/>
    </isoform>
    <isoform>
        <id>O08839-4</id>
        <name>AMPH2-4</name>
        <sequence type="described" ref="VSP_000256 VSP_000257"/>
    </isoform>
    <isoform>
        <id>O08839-5</id>
        <name>AMPH2-5</name>
        <sequence type="described" ref="VSP_000259"/>
    </isoform>
    <isoform>
        <id>O08839-6</id>
        <name>AMPH2-6</name>
        <sequence type="described" ref="VSP_000256 VSP_000259"/>
    </isoform>
</comment>
<comment type="tissue specificity">
    <text evidence="12">Highly expressed in the brain and muscle. Isoform AMPH2-1 is expressed only in the brain where it is concentrated in axon initial segments and nodes of Ranvier. Isoform AMPH2-2 is widely expressed.</text>
</comment>
<comment type="PTM">
    <text>Phosphorylated by protein kinase C.</text>
</comment>